<gene>
    <name evidence="1" type="primary">rpiA</name>
    <name type="ordered locus">LBUL_0472</name>
</gene>
<accession>Q04BQ8</accession>
<protein>
    <recommendedName>
        <fullName evidence="1">Ribose-5-phosphate isomerase A</fullName>
        <ecNumber evidence="1">5.3.1.6</ecNumber>
    </recommendedName>
    <alternativeName>
        <fullName evidence="1">Phosphoriboisomerase A</fullName>
        <shortName evidence="1">PRI</shortName>
    </alternativeName>
</protein>
<feature type="chain" id="PRO_1000016940" description="Ribose-5-phosphate isomerase A">
    <location>
        <begin position="1"/>
        <end position="230"/>
    </location>
</feature>
<feature type="active site" description="Proton acceptor" evidence="1">
    <location>
        <position position="109"/>
    </location>
</feature>
<feature type="binding site" evidence="1">
    <location>
        <begin position="31"/>
        <end position="34"/>
    </location>
    <ligand>
        <name>substrate</name>
    </ligand>
</feature>
<feature type="binding site" evidence="1">
    <location>
        <begin position="87"/>
        <end position="90"/>
    </location>
    <ligand>
        <name>substrate</name>
    </ligand>
</feature>
<feature type="binding site" evidence="1">
    <location>
        <begin position="100"/>
        <end position="103"/>
    </location>
    <ligand>
        <name>substrate</name>
    </ligand>
</feature>
<feature type="binding site" evidence="1">
    <location>
        <position position="127"/>
    </location>
    <ligand>
        <name>substrate</name>
    </ligand>
</feature>
<dbReference type="EC" id="5.3.1.6" evidence="1"/>
<dbReference type="EMBL" id="CP000412">
    <property type="protein sequence ID" value="ABJ58114.1"/>
    <property type="molecule type" value="Genomic_DNA"/>
</dbReference>
<dbReference type="RefSeq" id="WP_003618787.1">
    <property type="nucleotide sequence ID" value="NC_008529.1"/>
</dbReference>
<dbReference type="SMR" id="Q04BQ8"/>
<dbReference type="KEGG" id="lbu:LBUL_0472"/>
<dbReference type="HOGENOM" id="CLU_056590_1_0_9"/>
<dbReference type="BioCyc" id="LDEL321956:LBUL_RS02230-MONOMER"/>
<dbReference type="UniPathway" id="UPA00115">
    <property type="reaction ID" value="UER00412"/>
</dbReference>
<dbReference type="GO" id="GO:0005829">
    <property type="term" value="C:cytosol"/>
    <property type="evidence" value="ECO:0007669"/>
    <property type="project" value="TreeGrafter"/>
</dbReference>
<dbReference type="GO" id="GO:0004751">
    <property type="term" value="F:ribose-5-phosphate isomerase activity"/>
    <property type="evidence" value="ECO:0007669"/>
    <property type="project" value="UniProtKB-UniRule"/>
</dbReference>
<dbReference type="GO" id="GO:0006014">
    <property type="term" value="P:D-ribose metabolic process"/>
    <property type="evidence" value="ECO:0007669"/>
    <property type="project" value="TreeGrafter"/>
</dbReference>
<dbReference type="GO" id="GO:0009052">
    <property type="term" value="P:pentose-phosphate shunt, non-oxidative branch"/>
    <property type="evidence" value="ECO:0007669"/>
    <property type="project" value="UniProtKB-UniRule"/>
</dbReference>
<dbReference type="CDD" id="cd01398">
    <property type="entry name" value="RPI_A"/>
    <property type="match status" value="1"/>
</dbReference>
<dbReference type="FunFam" id="3.40.50.1360:FF:000001">
    <property type="entry name" value="Ribose-5-phosphate isomerase A"/>
    <property type="match status" value="1"/>
</dbReference>
<dbReference type="Gene3D" id="3.30.70.260">
    <property type="match status" value="1"/>
</dbReference>
<dbReference type="Gene3D" id="3.40.50.1360">
    <property type="match status" value="1"/>
</dbReference>
<dbReference type="HAMAP" id="MF_00170">
    <property type="entry name" value="Rib_5P_isom_A"/>
    <property type="match status" value="1"/>
</dbReference>
<dbReference type="InterPro" id="IPR037171">
    <property type="entry name" value="NagB/RpiA_transferase-like"/>
</dbReference>
<dbReference type="InterPro" id="IPR020672">
    <property type="entry name" value="Ribose5P_isomerase_typA_subgr"/>
</dbReference>
<dbReference type="InterPro" id="IPR004788">
    <property type="entry name" value="Ribose5P_isomerase_type_A"/>
</dbReference>
<dbReference type="NCBIfam" id="NF001924">
    <property type="entry name" value="PRK00702.1"/>
    <property type="match status" value="1"/>
</dbReference>
<dbReference type="NCBIfam" id="TIGR00021">
    <property type="entry name" value="rpiA"/>
    <property type="match status" value="1"/>
</dbReference>
<dbReference type="PANTHER" id="PTHR11934">
    <property type="entry name" value="RIBOSE-5-PHOSPHATE ISOMERASE"/>
    <property type="match status" value="1"/>
</dbReference>
<dbReference type="PANTHER" id="PTHR11934:SF0">
    <property type="entry name" value="RIBOSE-5-PHOSPHATE ISOMERASE"/>
    <property type="match status" value="1"/>
</dbReference>
<dbReference type="Pfam" id="PF06026">
    <property type="entry name" value="Rib_5-P_isom_A"/>
    <property type="match status" value="1"/>
</dbReference>
<dbReference type="SUPFAM" id="SSF75445">
    <property type="entry name" value="D-ribose-5-phosphate isomerase (RpiA), lid domain"/>
    <property type="match status" value="1"/>
</dbReference>
<dbReference type="SUPFAM" id="SSF100950">
    <property type="entry name" value="NagB/RpiA/CoA transferase-like"/>
    <property type="match status" value="1"/>
</dbReference>
<proteinExistence type="inferred from homology"/>
<comment type="function">
    <text evidence="1">Catalyzes the reversible conversion of ribose-5-phosphate to ribulose 5-phosphate.</text>
</comment>
<comment type="catalytic activity">
    <reaction evidence="1">
        <text>aldehydo-D-ribose 5-phosphate = D-ribulose 5-phosphate</text>
        <dbReference type="Rhea" id="RHEA:14657"/>
        <dbReference type="ChEBI" id="CHEBI:58121"/>
        <dbReference type="ChEBI" id="CHEBI:58273"/>
        <dbReference type="EC" id="5.3.1.6"/>
    </reaction>
</comment>
<comment type="pathway">
    <text evidence="1">Carbohydrate degradation; pentose phosphate pathway; D-ribose 5-phosphate from D-ribulose 5-phosphate (non-oxidative stage): step 1/1.</text>
</comment>
<comment type="subunit">
    <text evidence="1">Homodimer.</text>
</comment>
<comment type="similarity">
    <text evidence="1">Belongs to the ribose 5-phosphate isomerase family.</text>
</comment>
<reference key="1">
    <citation type="journal article" date="2006" name="Proc. Natl. Acad. Sci. U.S.A.">
        <title>Comparative genomics of the lactic acid bacteria.</title>
        <authorList>
            <person name="Makarova K.S."/>
            <person name="Slesarev A."/>
            <person name="Wolf Y.I."/>
            <person name="Sorokin A."/>
            <person name="Mirkin B."/>
            <person name="Koonin E.V."/>
            <person name="Pavlov A."/>
            <person name="Pavlova N."/>
            <person name="Karamychev V."/>
            <person name="Polouchine N."/>
            <person name="Shakhova V."/>
            <person name="Grigoriev I."/>
            <person name="Lou Y."/>
            <person name="Rohksar D."/>
            <person name="Lucas S."/>
            <person name="Huang K."/>
            <person name="Goodstein D.M."/>
            <person name="Hawkins T."/>
            <person name="Plengvidhya V."/>
            <person name="Welker D."/>
            <person name="Hughes J."/>
            <person name="Goh Y."/>
            <person name="Benson A."/>
            <person name="Baldwin K."/>
            <person name="Lee J.-H."/>
            <person name="Diaz-Muniz I."/>
            <person name="Dosti B."/>
            <person name="Smeianov V."/>
            <person name="Wechter W."/>
            <person name="Barabote R."/>
            <person name="Lorca G."/>
            <person name="Altermann E."/>
            <person name="Barrangou R."/>
            <person name="Ganesan B."/>
            <person name="Xie Y."/>
            <person name="Rawsthorne H."/>
            <person name="Tamir D."/>
            <person name="Parker C."/>
            <person name="Breidt F."/>
            <person name="Broadbent J.R."/>
            <person name="Hutkins R."/>
            <person name="O'Sullivan D."/>
            <person name="Steele J."/>
            <person name="Unlu G."/>
            <person name="Saier M.H. Jr."/>
            <person name="Klaenhammer T."/>
            <person name="Richardson P."/>
            <person name="Kozyavkin S."/>
            <person name="Weimer B.C."/>
            <person name="Mills D.A."/>
        </authorList>
    </citation>
    <scope>NUCLEOTIDE SEQUENCE [LARGE SCALE GENOMIC DNA]</scope>
    <source>
        <strain>ATCC BAA-365 / Lb-18</strain>
    </source>
</reference>
<keyword id="KW-0413">Isomerase</keyword>
<name>RPIA_LACDB</name>
<evidence type="ECO:0000255" key="1">
    <source>
        <dbReference type="HAMAP-Rule" id="MF_00170"/>
    </source>
</evidence>
<organism>
    <name type="scientific">Lactobacillus delbrueckii subsp. bulgaricus (strain ATCC BAA-365 / Lb-18)</name>
    <dbReference type="NCBI Taxonomy" id="321956"/>
    <lineage>
        <taxon>Bacteria</taxon>
        <taxon>Bacillati</taxon>
        <taxon>Bacillota</taxon>
        <taxon>Bacilli</taxon>
        <taxon>Lactobacillales</taxon>
        <taxon>Lactobacillaceae</taxon>
        <taxon>Lactobacillus</taxon>
    </lineage>
</organism>
<sequence length="230" mass="24930">MDQAKQDELKKAAAKKAAALVEDGMVLGVGTGSTVKFFIDELGKKKAAGLTLKAVVTTSSRSQKQLEGYGFTVSPLSEVDQVDLTVDGADRVDKQLNGIKGGGAALTLEKNVAVNSKKNVWIVDESKVVDHLSGFALPVEVLPISCMQVEKRLADEGLKPEFRLTEDGQRLKTHYGNYILDLKLDRIPVPSGLADYLDHTVGVVEHGLFLNICDQVIIARDNGEIEVRSR</sequence>